<organism>
    <name type="scientific">Brucella canis (strain ATCC 23365 / NCTC 10854 / RM-666)</name>
    <dbReference type="NCBI Taxonomy" id="483179"/>
    <lineage>
        <taxon>Bacteria</taxon>
        <taxon>Pseudomonadati</taxon>
        <taxon>Pseudomonadota</taxon>
        <taxon>Alphaproteobacteria</taxon>
        <taxon>Hyphomicrobiales</taxon>
        <taxon>Brucellaceae</taxon>
        <taxon>Brucella/Ochrobactrum group</taxon>
        <taxon>Brucella</taxon>
    </lineage>
</organism>
<reference key="1">
    <citation type="submission" date="2007-10" db="EMBL/GenBank/DDBJ databases">
        <title>Brucella canis ATCC 23365 whole genome shotgun sequencing project.</title>
        <authorList>
            <person name="Setubal J.C."/>
            <person name="Bowns C."/>
            <person name="Boyle S."/>
            <person name="Crasta O.R."/>
            <person name="Czar M.J."/>
            <person name="Dharmanolla C."/>
            <person name="Gillespie J.J."/>
            <person name="Kenyon R.W."/>
            <person name="Lu J."/>
            <person name="Mane S."/>
            <person name="Mohapatra S."/>
            <person name="Nagrani S."/>
            <person name="Purkayastha A."/>
            <person name="Rajasimha H.K."/>
            <person name="Shallom J.M."/>
            <person name="Shallom S."/>
            <person name="Shukla M."/>
            <person name="Snyder E.E."/>
            <person name="Sobral B.W."/>
            <person name="Wattam A.R."/>
            <person name="Will R."/>
            <person name="Williams K."/>
            <person name="Yoo H."/>
            <person name="Bruce D."/>
            <person name="Detter C."/>
            <person name="Munk C."/>
            <person name="Brettin T.S."/>
        </authorList>
    </citation>
    <scope>NUCLEOTIDE SEQUENCE [LARGE SCALE GENOMIC DNA]</scope>
    <source>
        <strain>ATCC 23365 / NCTC 10854 / RM-666</strain>
    </source>
</reference>
<dbReference type="EC" id="3.13.2.1" evidence="1"/>
<dbReference type="EMBL" id="CP000872">
    <property type="protein sequence ID" value="ABX63126.1"/>
    <property type="molecule type" value="Genomic_DNA"/>
</dbReference>
<dbReference type="RefSeq" id="WP_002965162.1">
    <property type="nucleotide sequence ID" value="NC_010103.1"/>
</dbReference>
<dbReference type="SMR" id="A9M9T1"/>
<dbReference type="GeneID" id="97534642"/>
<dbReference type="KEGG" id="bcs:BCAN_A2143"/>
<dbReference type="HOGENOM" id="CLU_025194_2_0_5"/>
<dbReference type="PhylomeDB" id="A9M9T1"/>
<dbReference type="UniPathway" id="UPA00314">
    <property type="reaction ID" value="UER00076"/>
</dbReference>
<dbReference type="Proteomes" id="UP000001385">
    <property type="component" value="Chromosome I"/>
</dbReference>
<dbReference type="GO" id="GO:0005829">
    <property type="term" value="C:cytosol"/>
    <property type="evidence" value="ECO:0007669"/>
    <property type="project" value="TreeGrafter"/>
</dbReference>
<dbReference type="GO" id="GO:0004013">
    <property type="term" value="F:adenosylhomocysteinase activity"/>
    <property type="evidence" value="ECO:0007669"/>
    <property type="project" value="UniProtKB-UniRule"/>
</dbReference>
<dbReference type="GO" id="GO:0071269">
    <property type="term" value="P:L-homocysteine biosynthetic process"/>
    <property type="evidence" value="ECO:0007669"/>
    <property type="project" value="UniProtKB-UniRule"/>
</dbReference>
<dbReference type="GO" id="GO:0006730">
    <property type="term" value="P:one-carbon metabolic process"/>
    <property type="evidence" value="ECO:0007669"/>
    <property type="project" value="UniProtKB-KW"/>
</dbReference>
<dbReference type="GO" id="GO:0033353">
    <property type="term" value="P:S-adenosylmethionine cycle"/>
    <property type="evidence" value="ECO:0007669"/>
    <property type="project" value="TreeGrafter"/>
</dbReference>
<dbReference type="CDD" id="cd00401">
    <property type="entry name" value="SAHH"/>
    <property type="match status" value="1"/>
</dbReference>
<dbReference type="FunFam" id="3.40.50.720:FF:000004">
    <property type="entry name" value="Adenosylhomocysteinase"/>
    <property type="match status" value="1"/>
</dbReference>
<dbReference type="Gene3D" id="3.40.50.1480">
    <property type="entry name" value="Adenosylhomocysteinase-like"/>
    <property type="match status" value="1"/>
</dbReference>
<dbReference type="Gene3D" id="3.40.50.720">
    <property type="entry name" value="NAD(P)-binding Rossmann-like Domain"/>
    <property type="match status" value="1"/>
</dbReference>
<dbReference type="HAMAP" id="MF_00563">
    <property type="entry name" value="AdoHcyase"/>
    <property type="match status" value="1"/>
</dbReference>
<dbReference type="InterPro" id="IPR042172">
    <property type="entry name" value="Adenosylhomocyst_ase-like_sf"/>
</dbReference>
<dbReference type="InterPro" id="IPR000043">
    <property type="entry name" value="Adenosylhomocysteinase-like"/>
</dbReference>
<dbReference type="InterPro" id="IPR015878">
    <property type="entry name" value="Ado_hCys_hydrolase_NAD-bd"/>
</dbReference>
<dbReference type="InterPro" id="IPR036291">
    <property type="entry name" value="NAD(P)-bd_dom_sf"/>
</dbReference>
<dbReference type="InterPro" id="IPR020082">
    <property type="entry name" value="S-Ado-L-homoCys_hydrolase_CS"/>
</dbReference>
<dbReference type="NCBIfam" id="TIGR00936">
    <property type="entry name" value="ahcY"/>
    <property type="match status" value="1"/>
</dbReference>
<dbReference type="NCBIfam" id="NF004005">
    <property type="entry name" value="PRK05476.2-3"/>
    <property type="match status" value="1"/>
</dbReference>
<dbReference type="PANTHER" id="PTHR23420">
    <property type="entry name" value="ADENOSYLHOMOCYSTEINASE"/>
    <property type="match status" value="1"/>
</dbReference>
<dbReference type="PANTHER" id="PTHR23420:SF0">
    <property type="entry name" value="ADENOSYLHOMOCYSTEINASE"/>
    <property type="match status" value="1"/>
</dbReference>
<dbReference type="Pfam" id="PF05221">
    <property type="entry name" value="AdoHcyase"/>
    <property type="match status" value="1"/>
</dbReference>
<dbReference type="Pfam" id="PF00670">
    <property type="entry name" value="AdoHcyase_NAD"/>
    <property type="match status" value="1"/>
</dbReference>
<dbReference type="PIRSF" id="PIRSF001109">
    <property type="entry name" value="Ad_hcy_hydrolase"/>
    <property type="match status" value="1"/>
</dbReference>
<dbReference type="SMART" id="SM00996">
    <property type="entry name" value="AdoHcyase"/>
    <property type="match status" value="1"/>
</dbReference>
<dbReference type="SMART" id="SM00997">
    <property type="entry name" value="AdoHcyase_NAD"/>
    <property type="match status" value="1"/>
</dbReference>
<dbReference type="SUPFAM" id="SSF52283">
    <property type="entry name" value="Formate/glycerate dehydrogenase catalytic domain-like"/>
    <property type="match status" value="1"/>
</dbReference>
<dbReference type="SUPFAM" id="SSF51735">
    <property type="entry name" value="NAD(P)-binding Rossmann-fold domains"/>
    <property type="match status" value="1"/>
</dbReference>
<dbReference type="PROSITE" id="PS00738">
    <property type="entry name" value="ADOHCYASE_1"/>
    <property type="match status" value="1"/>
</dbReference>
<dbReference type="PROSITE" id="PS00739">
    <property type="entry name" value="ADOHCYASE_2"/>
    <property type="match status" value="1"/>
</dbReference>
<gene>
    <name evidence="1" type="primary">ahcY</name>
    <name type="ordered locus">BCAN_A2143</name>
</gene>
<name>SAHH_BRUC2</name>
<feature type="chain" id="PRO_1000082276" description="Adenosylhomocysteinase">
    <location>
        <begin position="1"/>
        <end position="466"/>
    </location>
</feature>
<feature type="binding site" evidence="1">
    <location>
        <position position="57"/>
    </location>
    <ligand>
        <name>substrate</name>
    </ligand>
</feature>
<feature type="binding site" evidence="1">
    <location>
        <position position="132"/>
    </location>
    <ligand>
        <name>substrate</name>
    </ligand>
</feature>
<feature type="binding site" evidence="1">
    <location>
        <position position="192"/>
    </location>
    <ligand>
        <name>substrate</name>
    </ligand>
</feature>
<feature type="binding site" evidence="1">
    <location>
        <begin position="193"/>
        <end position="195"/>
    </location>
    <ligand>
        <name>NAD(+)</name>
        <dbReference type="ChEBI" id="CHEBI:57540"/>
    </ligand>
</feature>
<feature type="binding site" evidence="1">
    <location>
        <position position="222"/>
    </location>
    <ligand>
        <name>substrate</name>
    </ligand>
</feature>
<feature type="binding site" evidence="1">
    <location>
        <position position="226"/>
    </location>
    <ligand>
        <name>substrate</name>
    </ligand>
</feature>
<feature type="binding site" evidence="1">
    <location>
        <position position="227"/>
    </location>
    <ligand>
        <name>NAD(+)</name>
        <dbReference type="ChEBI" id="CHEBI:57540"/>
    </ligand>
</feature>
<feature type="binding site" evidence="1">
    <location>
        <begin position="256"/>
        <end position="261"/>
    </location>
    <ligand>
        <name>NAD(+)</name>
        <dbReference type="ChEBI" id="CHEBI:57540"/>
    </ligand>
</feature>
<feature type="binding site" evidence="1">
    <location>
        <position position="279"/>
    </location>
    <ligand>
        <name>NAD(+)</name>
        <dbReference type="ChEBI" id="CHEBI:57540"/>
    </ligand>
</feature>
<feature type="binding site" evidence="1">
    <location>
        <position position="314"/>
    </location>
    <ligand>
        <name>NAD(+)</name>
        <dbReference type="ChEBI" id="CHEBI:57540"/>
    </ligand>
</feature>
<feature type="binding site" evidence="1">
    <location>
        <begin position="335"/>
        <end position="337"/>
    </location>
    <ligand>
        <name>NAD(+)</name>
        <dbReference type="ChEBI" id="CHEBI:57540"/>
    </ligand>
</feature>
<feature type="binding site" evidence="1">
    <location>
        <position position="380"/>
    </location>
    <ligand>
        <name>NAD(+)</name>
        <dbReference type="ChEBI" id="CHEBI:57540"/>
    </ligand>
</feature>
<accession>A9M9T1</accession>
<evidence type="ECO:0000255" key="1">
    <source>
        <dbReference type="HAMAP-Rule" id="MF_00563"/>
    </source>
</evidence>
<sequence length="466" mass="50791">MTASQDFVVKDISLADWGRKELDIAETEMPGLMAAREEFGKSQPLKGARISGSLHMTIQTAVLIETLKVLGAEVRWASCNIFSTQDHAAAAIAATGTPVFAVKGETLEEYWTYTDQIFQWPDGEPSNMILDDGGDATMYILIGARAEAGEDVLSNPQSEEEEVLFAQIKKRMAATPGFFTKQRAAIKGVTEETTTGVNRLYQLQKKGLLPFPAINVNDSVTKSKFDNKYGCKESLVDGIRRGTDVMMAGKVAVVCGYGDVGKGSAQSLAGAGARVKVTEVDPICALQAAMDGFEVVTLDDAASTADIVVTTTGNKDVITIDHMRKMKDMCIVGNIGHFDNEIQVAALRNLKWTNVKPQVDLIEFPDGKRLILLSEGRLLNLGNATGHPSFVMSASFTNQVLGQIELFTRTDAYKNEVYVLPKHLDEKVARLHLDKLGAKLTVLSEEQAAYIGVTPQGPFKSEHYRY</sequence>
<keyword id="KW-0963">Cytoplasm</keyword>
<keyword id="KW-0378">Hydrolase</keyword>
<keyword id="KW-0520">NAD</keyword>
<keyword id="KW-0554">One-carbon metabolism</keyword>
<keyword id="KW-1185">Reference proteome</keyword>
<protein>
    <recommendedName>
        <fullName evidence="1">Adenosylhomocysteinase</fullName>
        <ecNumber evidence="1">3.13.2.1</ecNumber>
    </recommendedName>
    <alternativeName>
        <fullName evidence="1">S-adenosyl-L-homocysteine hydrolase</fullName>
        <shortName evidence="1">AdoHcyase</shortName>
    </alternativeName>
</protein>
<proteinExistence type="inferred from homology"/>
<comment type="function">
    <text evidence="1">May play a key role in the regulation of the intracellular concentration of adenosylhomocysteine.</text>
</comment>
<comment type="catalytic activity">
    <reaction evidence="1">
        <text>S-adenosyl-L-homocysteine + H2O = L-homocysteine + adenosine</text>
        <dbReference type="Rhea" id="RHEA:21708"/>
        <dbReference type="ChEBI" id="CHEBI:15377"/>
        <dbReference type="ChEBI" id="CHEBI:16335"/>
        <dbReference type="ChEBI" id="CHEBI:57856"/>
        <dbReference type="ChEBI" id="CHEBI:58199"/>
        <dbReference type="EC" id="3.13.2.1"/>
    </reaction>
</comment>
<comment type="cofactor">
    <cofactor evidence="1">
        <name>NAD(+)</name>
        <dbReference type="ChEBI" id="CHEBI:57540"/>
    </cofactor>
    <text evidence="1">Binds 1 NAD(+) per subunit.</text>
</comment>
<comment type="pathway">
    <text evidence="1">Amino-acid biosynthesis; L-homocysteine biosynthesis; L-homocysteine from S-adenosyl-L-homocysteine: step 1/1.</text>
</comment>
<comment type="subcellular location">
    <subcellularLocation>
        <location evidence="1">Cytoplasm</location>
    </subcellularLocation>
</comment>
<comment type="similarity">
    <text evidence="1">Belongs to the adenosylhomocysteinase family.</text>
</comment>